<comment type="function">
    <text>Inhibits the mitochondrial pyruvate dehydrogenase complex by phosphorylation of the E1 alpha subunit, thus contributing to the regulation of glucose metabolism.</text>
</comment>
<comment type="catalytic activity">
    <reaction>
        <text>L-seryl-[pyruvate dehydrogenase E1 alpha subunit] + ATP = O-phospho-L-seryl-[pyruvate dehydrogenase E1 alpha subunit] + ADP + H(+)</text>
        <dbReference type="Rhea" id="RHEA:23052"/>
        <dbReference type="Rhea" id="RHEA-COMP:13689"/>
        <dbReference type="Rhea" id="RHEA-COMP:13690"/>
        <dbReference type="ChEBI" id="CHEBI:15378"/>
        <dbReference type="ChEBI" id="CHEBI:29999"/>
        <dbReference type="ChEBI" id="CHEBI:30616"/>
        <dbReference type="ChEBI" id="CHEBI:83421"/>
        <dbReference type="ChEBI" id="CHEBI:456216"/>
        <dbReference type="EC" id="2.7.11.2"/>
    </reaction>
</comment>
<comment type="subcellular location">
    <subcellularLocation>
        <location>Mitochondrion matrix</location>
    </subcellularLocation>
</comment>
<comment type="similarity">
    <text evidence="4">Belongs to the PDK/BCKDK protein kinase family.</text>
</comment>
<name>PDK_ASCSU</name>
<sequence length="399" mass="45402">MFLTRRLLGPFTSAIARKLEHYSQFQPSSLTIQQYLDFGQTGTMKSSFLFLKNELLVRLANIMQEISLLPPTLLKMPSRRLVSNWYCESFEDLLQFEHAQVEPDIMSKFNDQLQTILKRHSRVVETMAEGLIELRESEGVDIASERGIQYFLDRFYINRISIRMLQNQHLVVFGVVLPESPRHIGCIDPGCDVESVVHDAYENARFLCERYYLTAPGMKLEMHNSVNPGMPISIVAVPSHLYHIMFELFKNSMRATVENHGADEDLPPIKVMVVRGAEDLSIKISDRGGGVSRTILDRLFTYMYSTAPPPPRDGTQPPLAGYGYGLPLSRLYARYFHGDMYLVSMEGYGTDAMIFLKAIPVEASEVLPIYSTSSRRQLTMSPQAADWSHQLPNHGNRNL</sequence>
<feature type="transit peptide" description="Mitochondrion" evidence="2">
    <location>
        <begin position="1"/>
        <end position="18"/>
    </location>
</feature>
<feature type="chain" id="PRO_0000023449" description="[Pyruvate dehydrogenase (acetyl-transferring)] kinase, mitochondrial">
    <location>
        <begin position="19"/>
        <end position="399"/>
    </location>
</feature>
<feature type="domain" description="Histidine kinase" evidence="3">
    <location>
        <begin position="123"/>
        <end position="360"/>
    </location>
</feature>
<feature type="binding site" evidence="1">
    <location>
        <begin position="247"/>
        <end position="254"/>
    </location>
    <ligand>
        <name>ATP</name>
        <dbReference type="ChEBI" id="CHEBI:30616"/>
    </ligand>
</feature>
<feature type="binding site" evidence="1">
    <location>
        <position position="286"/>
    </location>
    <ligand>
        <name>ATP</name>
        <dbReference type="ChEBI" id="CHEBI:30616"/>
    </ligand>
</feature>
<feature type="binding site" evidence="1">
    <location>
        <begin position="305"/>
        <end position="306"/>
    </location>
    <ligand>
        <name>ATP</name>
        <dbReference type="ChEBI" id="CHEBI:30616"/>
    </ligand>
</feature>
<feature type="binding site" evidence="1">
    <location>
        <begin position="321"/>
        <end position="326"/>
    </location>
    <ligand>
        <name>ATP</name>
        <dbReference type="ChEBI" id="CHEBI:30616"/>
    </ligand>
</feature>
<keyword id="KW-0067">ATP-binding</keyword>
<keyword id="KW-0418">Kinase</keyword>
<keyword id="KW-0496">Mitochondrion</keyword>
<keyword id="KW-0547">Nucleotide-binding</keyword>
<keyword id="KW-0808">Transferase</keyword>
<keyword id="KW-0809">Transit peptide</keyword>
<dbReference type="EC" id="2.7.11.2"/>
<dbReference type="EMBL" id="U94519">
    <property type="protein sequence ID" value="AAB52573.1"/>
    <property type="molecule type" value="mRNA"/>
</dbReference>
<dbReference type="SMR" id="O02623"/>
<dbReference type="BioCyc" id="MetaCyc:MONOMER-18304"/>
<dbReference type="BRENDA" id="2.7.11.2">
    <property type="organism ID" value="474"/>
</dbReference>
<dbReference type="GO" id="GO:0005759">
    <property type="term" value="C:mitochondrial matrix"/>
    <property type="evidence" value="ECO:0007669"/>
    <property type="project" value="UniProtKB-SubCell"/>
</dbReference>
<dbReference type="GO" id="GO:0005524">
    <property type="term" value="F:ATP binding"/>
    <property type="evidence" value="ECO:0007669"/>
    <property type="project" value="UniProtKB-KW"/>
</dbReference>
<dbReference type="GO" id="GO:0004740">
    <property type="term" value="F:pyruvate dehydrogenase (acetyl-transferring) kinase activity"/>
    <property type="evidence" value="ECO:0007669"/>
    <property type="project" value="UniProtKB-EC"/>
</dbReference>
<dbReference type="GO" id="GO:0010906">
    <property type="term" value="P:regulation of glucose metabolic process"/>
    <property type="evidence" value="ECO:0007669"/>
    <property type="project" value="TreeGrafter"/>
</dbReference>
<dbReference type="CDD" id="cd16929">
    <property type="entry name" value="HATPase_PDK-like"/>
    <property type="match status" value="1"/>
</dbReference>
<dbReference type="FunFam" id="3.30.565.10:FF:000007">
    <property type="entry name" value="Mitochondrial pyruvate dehydrogenase kinase isoform 2"/>
    <property type="match status" value="1"/>
</dbReference>
<dbReference type="Gene3D" id="1.20.140.20">
    <property type="entry name" value="Alpha-ketoacid/pyruvate dehydrogenase kinase, N-terminal domain"/>
    <property type="match status" value="1"/>
</dbReference>
<dbReference type="Gene3D" id="3.30.565.10">
    <property type="entry name" value="Histidine kinase-like ATPase, C-terminal domain"/>
    <property type="match status" value="1"/>
</dbReference>
<dbReference type="InterPro" id="IPR036784">
    <property type="entry name" value="AK/P_DHK_N_sf"/>
</dbReference>
<dbReference type="InterPro" id="IPR018955">
    <property type="entry name" value="BCDHK/PDK_N"/>
</dbReference>
<dbReference type="InterPro" id="IPR039028">
    <property type="entry name" value="BCKD/PDK"/>
</dbReference>
<dbReference type="InterPro" id="IPR036890">
    <property type="entry name" value="HATPase_C_sf"/>
</dbReference>
<dbReference type="InterPro" id="IPR005467">
    <property type="entry name" value="His_kinase_dom"/>
</dbReference>
<dbReference type="PANTHER" id="PTHR11947:SF3">
    <property type="entry name" value="[PYRUVATE DEHYDROGENASE (ACETYL-TRANSFERRING)] KINASE, MITOCHONDRIAL"/>
    <property type="match status" value="1"/>
</dbReference>
<dbReference type="PANTHER" id="PTHR11947">
    <property type="entry name" value="PYRUVATE DEHYDROGENASE KINASE"/>
    <property type="match status" value="1"/>
</dbReference>
<dbReference type="Pfam" id="PF10436">
    <property type="entry name" value="BCDHK_Adom3"/>
    <property type="match status" value="1"/>
</dbReference>
<dbReference type="Pfam" id="PF02518">
    <property type="entry name" value="HATPase_c"/>
    <property type="match status" value="1"/>
</dbReference>
<dbReference type="SMART" id="SM00387">
    <property type="entry name" value="HATPase_c"/>
    <property type="match status" value="1"/>
</dbReference>
<dbReference type="SUPFAM" id="SSF69012">
    <property type="entry name" value="alpha-ketoacid dehydrogenase kinase, N-terminal domain"/>
    <property type="match status" value="1"/>
</dbReference>
<dbReference type="SUPFAM" id="SSF55874">
    <property type="entry name" value="ATPase domain of HSP90 chaperone/DNA topoisomerase II/histidine kinase"/>
    <property type="match status" value="1"/>
</dbReference>
<dbReference type="PROSITE" id="PS50109">
    <property type="entry name" value="HIS_KIN"/>
    <property type="match status" value="1"/>
</dbReference>
<accession>O02623</accession>
<protein>
    <recommendedName>
        <fullName>[Pyruvate dehydrogenase (acetyl-transferring)] kinase, mitochondrial</fullName>
        <shortName>Pyruvate dehydrogenase kinase</shortName>
        <ecNumber>2.7.11.2</ecNumber>
    </recommendedName>
</protein>
<proteinExistence type="evidence at transcript level"/>
<evidence type="ECO:0000250" key="1"/>
<evidence type="ECO:0000255" key="2"/>
<evidence type="ECO:0000255" key="3">
    <source>
        <dbReference type="PROSITE-ProRule" id="PRU00107"/>
    </source>
</evidence>
<evidence type="ECO:0000305" key="4"/>
<reference key="1">
    <citation type="journal article" date="1998" name="Arch. Biochem. Biophys.">
        <title>Molecular cloning, functional expression, and characterization of pyruvate dehydrogenase kinase from anaerobic muscle of the parasitic nematode Ascaris suum.</title>
        <authorList>
            <person name="Chen W."/>
            <person name="Huang X."/>
            <person name="Komuniecki P.R."/>
            <person name="Komuniecki R."/>
        </authorList>
    </citation>
    <scope>NUCLEOTIDE SEQUENCE [MRNA]</scope>
</reference>
<organism>
    <name type="scientific">Ascaris suum</name>
    <name type="common">Pig roundworm</name>
    <name type="synonym">Ascaris lumbricoides</name>
    <dbReference type="NCBI Taxonomy" id="6253"/>
    <lineage>
        <taxon>Eukaryota</taxon>
        <taxon>Metazoa</taxon>
        <taxon>Ecdysozoa</taxon>
        <taxon>Nematoda</taxon>
        <taxon>Chromadorea</taxon>
        <taxon>Rhabditida</taxon>
        <taxon>Spirurina</taxon>
        <taxon>Ascaridomorpha</taxon>
        <taxon>Ascaridoidea</taxon>
        <taxon>Ascarididae</taxon>
        <taxon>Ascaris</taxon>
    </lineage>
</organism>